<name>MNMC_ACIBC</name>
<feature type="chain" id="PRO_0000347933" description="tRNA 5-methylaminomethyl-2-thiouridine biosynthesis bifunctional protein MnmC">
    <location>
        <begin position="1"/>
        <end position="623"/>
    </location>
</feature>
<feature type="region of interest" description="tRNA (mnm(5)s(2)U34)-methyltransferase">
    <location>
        <begin position="1"/>
        <end position="244"/>
    </location>
</feature>
<feature type="region of interest" description="FAD-dependent cmnm(5)s(2)U34 oxidoreductase">
    <location>
        <begin position="270"/>
        <end position="623"/>
    </location>
</feature>
<dbReference type="EC" id="2.1.1.61" evidence="1"/>
<dbReference type="EC" id="1.5.-.-" evidence="1"/>
<dbReference type="EMBL" id="CP000863">
    <property type="protein sequence ID" value="ACC58487.1"/>
    <property type="molecule type" value="Genomic_DNA"/>
</dbReference>
<dbReference type="RefSeq" id="WP_001043531.1">
    <property type="nucleotide sequence ID" value="NZ_CP031380.1"/>
</dbReference>
<dbReference type="SMR" id="B2HYP8"/>
<dbReference type="KEGG" id="abc:ACICU_03175"/>
<dbReference type="HOGENOM" id="CLU_022427_2_0_6"/>
<dbReference type="Proteomes" id="UP000008839">
    <property type="component" value="Chromosome"/>
</dbReference>
<dbReference type="GO" id="GO:0005737">
    <property type="term" value="C:cytoplasm"/>
    <property type="evidence" value="ECO:0007669"/>
    <property type="project" value="UniProtKB-SubCell"/>
</dbReference>
<dbReference type="GO" id="GO:0050660">
    <property type="term" value="F:flavin adenine dinucleotide binding"/>
    <property type="evidence" value="ECO:0007669"/>
    <property type="project" value="UniProtKB-UniRule"/>
</dbReference>
<dbReference type="GO" id="GO:0016645">
    <property type="term" value="F:oxidoreductase activity, acting on the CH-NH group of donors"/>
    <property type="evidence" value="ECO:0007669"/>
    <property type="project" value="InterPro"/>
</dbReference>
<dbReference type="GO" id="GO:0004808">
    <property type="term" value="F:tRNA (5-methylaminomethyl-2-thiouridylate)(34)-methyltransferase activity"/>
    <property type="evidence" value="ECO:0007669"/>
    <property type="project" value="UniProtKB-EC"/>
</dbReference>
<dbReference type="GO" id="GO:0032259">
    <property type="term" value="P:methylation"/>
    <property type="evidence" value="ECO:0007669"/>
    <property type="project" value="UniProtKB-KW"/>
</dbReference>
<dbReference type="GO" id="GO:0002097">
    <property type="term" value="P:tRNA wobble base modification"/>
    <property type="evidence" value="ECO:0007669"/>
    <property type="project" value="UniProtKB-UniRule"/>
</dbReference>
<dbReference type="Gene3D" id="3.30.9.10">
    <property type="entry name" value="D-Amino Acid Oxidase, subunit A, domain 2"/>
    <property type="match status" value="1"/>
</dbReference>
<dbReference type="Gene3D" id="3.50.50.60">
    <property type="entry name" value="FAD/NAD(P)-binding domain"/>
    <property type="match status" value="1"/>
</dbReference>
<dbReference type="Gene3D" id="3.40.50.150">
    <property type="entry name" value="Vaccinia Virus protein VP39"/>
    <property type="match status" value="1"/>
</dbReference>
<dbReference type="HAMAP" id="MF_01102">
    <property type="entry name" value="MnmC"/>
    <property type="match status" value="1"/>
</dbReference>
<dbReference type="InterPro" id="IPR006076">
    <property type="entry name" value="FAD-dep_OxRdtase"/>
</dbReference>
<dbReference type="InterPro" id="IPR036188">
    <property type="entry name" value="FAD/NAD-bd_sf"/>
</dbReference>
<dbReference type="InterPro" id="IPR008471">
    <property type="entry name" value="MnmC-like_methylTransf"/>
</dbReference>
<dbReference type="InterPro" id="IPR029063">
    <property type="entry name" value="SAM-dependent_MTases_sf"/>
</dbReference>
<dbReference type="InterPro" id="IPR023032">
    <property type="entry name" value="tRNA_MAMT_biosynth_bifunc_MnmC"/>
</dbReference>
<dbReference type="InterPro" id="IPR047785">
    <property type="entry name" value="tRNA_MNMC2"/>
</dbReference>
<dbReference type="InterPro" id="IPR017610">
    <property type="entry name" value="tRNA_S-uridine_synth_MnmC_C"/>
</dbReference>
<dbReference type="NCBIfam" id="TIGR03197">
    <property type="entry name" value="MnmC_Cterm"/>
    <property type="match status" value="1"/>
</dbReference>
<dbReference type="NCBIfam" id="NF033855">
    <property type="entry name" value="tRNA_MNMC2"/>
    <property type="match status" value="1"/>
</dbReference>
<dbReference type="PANTHER" id="PTHR13847">
    <property type="entry name" value="SARCOSINE DEHYDROGENASE-RELATED"/>
    <property type="match status" value="1"/>
</dbReference>
<dbReference type="PANTHER" id="PTHR13847:SF283">
    <property type="entry name" value="TRNA 5-METHYLAMINOMETHYL-2-THIOURIDINE BIOSYNTHESIS BIFUNCTIONAL PROTEIN MNMC"/>
    <property type="match status" value="1"/>
</dbReference>
<dbReference type="Pfam" id="PF01266">
    <property type="entry name" value="DAO"/>
    <property type="match status" value="1"/>
</dbReference>
<dbReference type="Pfam" id="PF05430">
    <property type="entry name" value="Methyltransf_30"/>
    <property type="match status" value="1"/>
</dbReference>
<dbReference type="SUPFAM" id="SSF54373">
    <property type="entry name" value="FAD-linked reductases, C-terminal domain"/>
    <property type="match status" value="1"/>
</dbReference>
<dbReference type="SUPFAM" id="SSF51971">
    <property type="entry name" value="Nucleotide-binding domain"/>
    <property type="match status" value="1"/>
</dbReference>
<comment type="function">
    <text evidence="1">Catalyzes the last two steps in the biosynthesis of 5-methylaminomethyl-2-thiouridine (mnm(5)s(2)U) at the wobble position (U34) in tRNA. Catalyzes the FAD-dependent demodification of cmnm(5)s(2)U34 to nm(5)s(2)U34, followed by the transfer of a methyl group from S-adenosyl-L-methionine to nm(5)s(2)U34, to form mnm(5)s(2)U34.</text>
</comment>
<comment type="catalytic activity">
    <reaction evidence="1">
        <text>5-aminomethyl-2-thiouridine(34) in tRNA + S-adenosyl-L-methionine = 5-methylaminomethyl-2-thiouridine(34) in tRNA + S-adenosyl-L-homocysteine + H(+)</text>
        <dbReference type="Rhea" id="RHEA:19569"/>
        <dbReference type="Rhea" id="RHEA-COMP:10195"/>
        <dbReference type="Rhea" id="RHEA-COMP:10197"/>
        <dbReference type="ChEBI" id="CHEBI:15378"/>
        <dbReference type="ChEBI" id="CHEBI:57856"/>
        <dbReference type="ChEBI" id="CHEBI:59789"/>
        <dbReference type="ChEBI" id="CHEBI:74454"/>
        <dbReference type="ChEBI" id="CHEBI:74455"/>
        <dbReference type="EC" id="2.1.1.61"/>
    </reaction>
</comment>
<comment type="cofactor">
    <cofactor evidence="1">
        <name>FAD</name>
        <dbReference type="ChEBI" id="CHEBI:57692"/>
    </cofactor>
</comment>
<comment type="subcellular location">
    <subcellularLocation>
        <location evidence="1">Cytoplasm</location>
    </subcellularLocation>
</comment>
<comment type="similarity">
    <text evidence="1">In the N-terminal section; belongs to the methyltransferase superfamily. tRNA (mnm(5)s(2)U34)-methyltransferase family.</text>
</comment>
<comment type="similarity">
    <text evidence="1">In the C-terminal section; belongs to the DAO family.</text>
</comment>
<keyword id="KW-0963">Cytoplasm</keyword>
<keyword id="KW-0274">FAD</keyword>
<keyword id="KW-0285">Flavoprotein</keyword>
<keyword id="KW-0489">Methyltransferase</keyword>
<keyword id="KW-0511">Multifunctional enzyme</keyword>
<keyword id="KW-0560">Oxidoreductase</keyword>
<keyword id="KW-0949">S-adenosyl-L-methionine</keyword>
<keyword id="KW-0808">Transferase</keyword>
<keyword id="KW-0819">tRNA processing</keyword>
<evidence type="ECO:0000255" key="1">
    <source>
        <dbReference type="HAMAP-Rule" id="MF_01102"/>
    </source>
</evidence>
<accession>B2HYP8</accession>
<organism>
    <name type="scientific">Acinetobacter baumannii (strain ACICU)</name>
    <dbReference type="NCBI Taxonomy" id="405416"/>
    <lineage>
        <taxon>Bacteria</taxon>
        <taxon>Pseudomonadati</taxon>
        <taxon>Pseudomonadota</taxon>
        <taxon>Gammaproteobacteria</taxon>
        <taxon>Moraxellales</taxon>
        <taxon>Moraxellaceae</taxon>
        <taxon>Acinetobacter</taxon>
        <taxon>Acinetobacter calcoaceticus/baumannii complex</taxon>
    </lineage>
</organism>
<reference key="1">
    <citation type="journal article" date="2008" name="Antimicrob. Agents Chemother.">
        <title>Whole-genome pyrosequencing of an epidemic multidrug-resistant Acinetobacter baumannii strain belonging to the European clone II group.</title>
        <authorList>
            <person name="Iacono M."/>
            <person name="Villa L."/>
            <person name="Fortini D."/>
            <person name="Bordoni R."/>
            <person name="Imperi F."/>
            <person name="Bonnal R.J."/>
            <person name="Sicheritz-Ponten T."/>
            <person name="De Bellis G."/>
            <person name="Visca P."/>
            <person name="Cassone A."/>
            <person name="Carattoli A."/>
        </authorList>
    </citation>
    <scope>NUCLEOTIDE SEQUENCE [LARGE SCALE GENOMIC DNA]</scope>
    <source>
        <strain>ACICU</strain>
    </source>
</reference>
<protein>
    <recommendedName>
        <fullName evidence="1">tRNA 5-methylaminomethyl-2-thiouridine biosynthesis bifunctional protein MnmC</fullName>
        <shortName evidence="1">tRNA mnm(5)s(2)U biosynthesis bifunctional protein</shortName>
    </recommendedName>
    <domain>
        <recommendedName>
            <fullName evidence="1">tRNA (mnm(5)s(2)U34)-methyltransferase</fullName>
            <ecNumber evidence="1">2.1.1.61</ecNumber>
        </recommendedName>
    </domain>
    <domain>
        <recommendedName>
            <fullName evidence="1">FAD-dependent cmnm(5)s(2)U34 oxidoreductase</fullName>
            <ecNumber evidence="1">1.5.-.-</ecNumber>
        </recommendedName>
    </domain>
</protein>
<sequence>MNKSNRIQTAELDWESIDGIEVPISKQFGDVYFSKDNGLLETRHVFLNGNDLSERLANLQDFEYFSVGETGFGTGLNILALWQLWQQVRPNNHSHLHAISVEKFPLSKADLIRALNVWDELRPLSKQLIEQYPFPLAGCHRLSFPEERFSIDLWLGDAQDIFPSMVKTKAVNAWFLDGFAPSCNPDMWEQNVLNNIVRLSDYGTTFASFSVAGILKRGLKAHGVDITRPRGFGHKREMLKAVWKAPVSEEILLEPVRDTFQFTQQRIAVIGAGIAGLSTAWAFAQRGHQVTLFERTVPLSGASGNPLALLNPKLCPIEQSHEHLMTLSWQHALNFYKNFQAFRPIQIQQMALKNAQDLLDLADQYPADIVTQQTSSLESDYPHILLTEAGAVSPHQLRDEILQHPGIELKIANITTLISFENKVQLKSGNETTLEADHVVVCCARESAALFENYPLLKPIRGQVSWVDNSFATLPLNEAYSYGGYCMQLNTSELILGASFYPNRDDQEVLLDDHVHNFELIHSVFPHYAKQLPPVEQWQGRASVRAQSPDYFPLVGKMQNESRISTFAGLGSKGFLFAPLCSEVLVAQILGEACPVPKSLLQKLDAQRFQKKVKPKKPYFKSQ</sequence>
<gene>
    <name evidence="1" type="primary">mnmC</name>
    <name type="ordered locus">ACICU_03175</name>
</gene>
<proteinExistence type="inferred from homology"/>